<name>RL24_ECOUT</name>
<evidence type="ECO:0000255" key="1">
    <source>
        <dbReference type="HAMAP-Rule" id="MF_01326"/>
    </source>
</evidence>
<evidence type="ECO:0000305" key="2"/>
<sequence length="104" mass="11346">MAAKIRRDDEVIVLTGKDKGKRGKVKNVLSSGKVIVEGINLVKKHQKPVPALNQPGGIVEKEAAIQVSNVAIFNATTGKADRVGFRFEDGKKVRFFKSNSETIK</sequence>
<comment type="function">
    <text evidence="1">One of two assembly initiator proteins, it binds directly to the 5'-end of the 23S rRNA, where it nucleates assembly of the 50S subunit.</text>
</comment>
<comment type="function">
    <text evidence="1">One of the proteins that surrounds the polypeptide exit tunnel on the outside of the subunit.</text>
</comment>
<comment type="subunit">
    <text evidence="1">Part of the 50S ribosomal subunit.</text>
</comment>
<comment type="similarity">
    <text evidence="1">Belongs to the universal ribosomal protein uL24 family.</text>
</comment>
<protein>
    <recommendedName>
        <fullName evidence="1">Large ribosomal subunit protein uL24</fullName>
    </recommendedName>
    <alternativeName>
        <fullName evidence="2">50S ribosomal protein L24</fullName>
    </alternativeName>
</protein>
<organism>
    <name type="scientific">Escherichia coli (strain UTI89 / UPEC)</name>
    <dbReference type="NCBI Taxonomy" id="364106"/>
    <lineage>
        <taxon>Bacteria</taxon>
        <taxon>Pseudomonadati</taxon>
        <taxon>Pseudomonadota</taxon>
        <taxon>Gammaproteobacteria</taxon>
        <taxon>Enterobacterales</taxon>
        <taxon>Enterobacteriaceae</taxon>
        <taxon>Escherichia</taxon>
    </lineage>
</organism>
<dbReference type="EMBL" id="CP000243">
    <property type="protein sequence ID" value="ABE09195.1"/>
    <property type="molecule type" value="Genomic_DNA"/>
</dbReference>
<dbReference type="RefSeq" id="WP_000729186.1">
    <property type="nucleotide sequence ID" value="NZ_CP064825.1"/>
</dbReference>
<dbReference type="SMR" id="Q1R619"/>
<dbReference type="KEGG" id="eci:UTI89_C3758"/>
<dbReference type="HOGENOM" id="CLU_093315_2_2_6"/>
<dbReference type="Proteomes" id="UP000001952">
    <property type="component" value="Chromosome"/>
</dbReference>
<dbReference type="GO" id="GO:0005829">
    <property type="term" value="C:cytosol"/>
    <property type="evidence" value="ECO:0007669"/>
    <property type="project" value="UniProtKB-ARBA"/>
</dbReference>
<dbReference type="GO" id="GO:1990904">
    <property type="term" value="C:ribonucleoprotein complex"/>
    <property type="evidence" value="ECO:0007669"/>
    <property type="project" value="UniProtKB-KW"/>
</dbReference>
<dbReference type="GO" id="GO:0005840">
    <property type="term" value="C:ribosome"/>
    <property type="evidence" value="ECO:0007669"/>
    <property type="project" value="UniProtKB-KW"/>
</dbReference>
<dbReference type="GO" id="GO:0019843">
    <property type="term" value="F:rRNA binding"/>
    <property type="evidence" value="ECO:0007669"/>
    <property type="project" value="UniProtKB-UniRule"/>
</dbReference>
<dbReference type="GO" id="GO:0003735">
    <property type="term" value="F:structural constituent of ribosome"/>
    <property type="evidence" value="ECO:0007669"/>
    <property type="project" value="InterPro"/>
</dbReference>
<dbReference type="GO" id="GO:0006412">
    <property type="term" value="P:translation"/>
    <property type="evidence" value="ECO:0007669"/>
    <property type="project" value="UniProtKB-UniRule"/>
</dbReference>
<dbReference type="CDD" id="cd06089">
    <property type="entry name" value="KOW_RPL26"/>
    <property type="match status" value="1"/>
</dbReference>
<dbReference type="FunFam" id="2.30.30.30:FF:000004">
    <property type="entry name" value="50S ribosomal protein L24"/>
    <property type="match status" value="1"/>
</dbReference>
<dbReference type="Gene3D" id="2.30.30.30">
    <property type="match status" value="1"/>
</dbReference>
<dbReference type="HAMAP" id="MF_01326_B">
    <property type="entry name" value="Ribosomal_uL24_B"/>
    <property type="match status" value="1"/>
</dbReference>
<dbReference type="InterPro" id="IPR005824">
    <property type="entry name" value="KOW"/>
</dbReference>
<dbReference type="InterPro" id="IPR014722">
    <property type="entry name" value="Rib_uL2_dom2"/>
</dbReference>
<dbReference type="InterPro" id="IPR003256">
    <property type="entry name" value="Ribosomal_uL24"/>
</dbReference>
<dbReference type="InterPro" id="IPR005825">
    <property type="entry name" value="Ribosomal_uL24_CS"/>
</dbReference>
<dbReference type="InterPro" id="IPR041988">
    <property type="entry name" value="Ribosomal_uL24_KOW"/>
</dbReference>
<dbReference type="InterPro" id="IPR008991">
    <property type="entry name" value="Translation_prot_SH3-like_sf"/>
</dbReference>
<dbReference type="NCBIfam" id="TIGR01079">
    <property type="entry name" value="rplX_bact"/>
    <property type="match status" value="1"/>
</dbReference>
<dbReference type="PANTHER" id="PTHR12903">
    <property type="entry name" value="MITOCHONDRIAL RIBOSOMAL PROTEIN L24"/>
    <property type="match status" value="1"/>
</dbReference>
<dbReference type="Pfam" id="PF00467">
    <property type="entry name" value="KOW"/>
    <property type="match status" value="1"/>
</dbReference>
<dbReference type="Pfam" id="PF17136">
    <property type="entry name" value="ribosomal_L24"/>
    <property type="match status" value="1"/>
</dbReference>
<dbReference type="SMART" id="SM00739">
    <property type="entry name" value="KOW"/>
    <property type="match status" value="1"/>
</dbReference>
<dbReference type="SUPFAM" id="SSF50104">
    <property type="entry name" value="Translation proteins SH3-like domain"/>
    <property type="match status" value="1"/>
</dbReference>
<dbReference type="PROSITE" id="PS01108">
    <property type="entry name" value="RIBOSOMAL_L24"/>
    <property type="match status" value="1"/>
</dbReference>
<proteinExistence type="inferred from homology"/>
<feature type="chain" id="PRO_1000052211" description="Large ribosomal subunit protein uL24">
    <location>
        <begin position="1"/>
        <end position="104"/>
    </location>
</feature>
<gene>
    <name evidence="1" type="primary">rplX</name>
    <name type="ordered locus">UTI89_C3758</name>
</gene>
<accession>Q1R619</accession>
<reference key="1">
    <citation type="journal article" date="2006" name="Proc. Natl. Acad. Sci. U.S.A.">
        <title>Identification of genes subject to positive selection in uropathogenic strains of Escherichia coli: a comparative genomics approach.</title>
        <authorList>
            <person name="Chen S.L."/>
            <person name="Hung C.-S."/>
            <person name="Xu J."/>
            <person name="Reigstad C.S."/>
            <person name="Magrini V."/>
            <person name="Sabo A."/>
            <person name="Blasiar D."/>
            <person name="Bieri T."/>
            <person name="Meyer R.R."/>
            <person name="Ozersky P."/>
            <person name="Armstrong J.R."/>
            <person name="Fulton R.S."/>
            <person name="Latreille J.P."/>
            <person name="Spieth J."/>
            <person name="Hooton T.M."/>
            <person name="Mardis E.R."/>
            <person name="Hultgren S.J."/>
            <person name="Gordon J.I."/>
        </authorList>
    </citation>
    <scope>NUCLEOTIDE SEQUENCE [LARGE SCALE GENOMIC DNA]</scope>
    <source>
        <strain>UTI89 / UPEC</strain>
    </source>
</reference>
<keyword id="KW-0687">Ribonucleoprotein</keyword>
<keyword id="KW-0689">Ribosomal protein</keyword>
<keyword id="KW-0694">RNA-binding</keyword>
<keyword id="KW-0699">rRNA-binding</keyword>